<accession>P62111</accession>
<accession>P12169</accession>
<evidence type="ECO:0000255" key="1">
    <source>
        <dbReference type="HAMAP-Rule" id="MF_00438"/>
    </source>
</evidence>
<evidence type="ECO:0000269" key="2">
    <source>
    </source>
</evidence>
<gene>
    <name evidence="1" type="primary">psbM</name>
</gene>
<dbReference type="EMBL" id="Z00044">
    <property type="protein sequence ID" value="CAA77413.1"/>
    <property type="molecule type" value="Genomic_DNA"/>
</dbReference>
<dbReference type="RefSeq" id="NP_054490.1">
    <property type="nucleotide sequence ID" value="NC_001879.2"/>
</dbReference>
<dbReference type="SMR" id="P62111"/>
<dbReference type="GeneID" id="800459"/>
<dbReference type="KEGG" id="nta:800459"/>
<dbReference type="OrthoDB" id="564131at2759"/>
<dbReference type="Proteomes" id="UP000084051">
    <property type="component" value="Unplaced"/>
</dbReference>
<dbReference type="GO" id="GO:0009535">
    <property type="term" value="C:chloroplast thylakoid membrane"/>
    <property type="evidence" value="ECO:0007669"/>
    <property type="project" value="UniProtKB-SubCell"/>
</dbReference>
<dbReference type="GO" id="GO:0009523">
    <property type="term" value="C:photosystem II"/>
    <property type="evidence" value="ECO:0007669"/>
    <property type="project" value="UniProtKB-KW"/>
</dbReference>
<dbReference type="GO" id="GO:0019684">
    <property type="term" value="P:photosynthesis, light reaction"/>
    <property type="evidence" value="ECO:0007669"/>
    <property type="project" value="InterPro"/>
</dbReference>
<dbReference type="HAMAP" id="MF_00438">
    <property type="entry name" value="PSII_PsbM"/>
    <property type="match status" value="1"/>
</dbReference>
<dbReference type="InterPro" id="IPR007826">
    <property type="entry name" value="PSII_PsbM"/>
</dbReference>
<dbReference type="InterPro" id="IPR037269">
    <property type="entry name" value="PSII_PsbM_sf"/>
</dbReference>
<dbReference type="NCBIfam" id="TIGR03038">
    <property type="entry name" value="PS_II_psbM"/>
    <property type="match status" value="1"/>
</dbReference>
<dbReference type="PANTHER" id="PTHR35774">
    <property type="entry name" value="PHOTOSYSTEM II REACTION CENTER PROTEIN M"/>
    <property type="match status" value="1"/>
</dbReference>
<dbReference type="PANTHER" id="PTHR35774:SF1">
    <property type="entry name" value="PHOTOSYSTEM II REACTION CENTER PROTEIN M"/>
    <property type="match status" value="1"/>
</dbReference>
<dbReference type="Pfam" id="PF05151">
    <property type="entry name" value="PsbM"/>
    <property type="match status" value="1"/>
</dbReference>
<dbReference type="SUPFAM" id="SSF161033">
    <property type="entry name" value="Photosystem II reaction center protein M, PsbM"/>
    <property type="match status" value="1"/>
</dbReference>
<geneLocation type="chloroplast"/>
<sequence>MEVNILAFIATALFILVPTAFLLIIYVKTVSQND</sequence>
<keyword id="KW-0150">Chloroplast</keyword>
<keyword id="KW-0472">Membrane</keyword>
<keyword id="KW-0602">Photosynthesis</keyword>
<keyword id="KW-0604">Photosystem II</keyword>
<keyword id="KW-0934">Plastid</keyword>
<keyword id="KW-0674">Reaction center</keyword>
<keyword id="KW-1185">Reference proteome</keyword>
<keyword id="KW-0793">Thylakoid</keyword>
<keyword id="KW-0812">Transmembrane</keyword>
<keyword id="KW-1133">Transmembrane helix</keyword>
<comment type="function">
    <text evidence="1 2">One of the components of the core complex of photosystem II (PSII). PSII is a light-driven water:plastoquinone oxidoreductase that uses light energy to abstract electrons from H(2)O, generating O(2) and a proton gradient subsequently used for ATP formation. It consists of a core antenna complex that captures photons, and an electron transfer chain that converts photonic excitation into a charge separation. This subunit is found at the monomer-monomer interface (By similarity). Plays a role in ensuring efficient and functional forward, backward and internal electron flow in PSII (PubMed:17261590).</text>
</comment>
<comment type="subunit">
    <text evidence="1">PSII is composed of 1 copy each of membrane proteins PsbA, PsbB, PsbC, PsbD, PsbE, PsbF, PsbH, PsbI, PsbJ, PsbK, PsbL, PsbM, PsbT, PsbX, PsbY, PsbZ, Psb30/Ycf12, at least 3 peripheral proteins of the oxygen-evolving complex and a large number of cofactors. It forms dimeric complexes.</text>
</comment>
<comment type="subcellular location">
    <subcellularLocation>
        <location evidence="1">Plastid</location>
        <location evidence="1">Chloroplast thylakoid membrane</location>
        <topology evidence="1">Single-pass membrane protein</topology>
    </subcellularLocation>
</comment>
<comment type="disruption phenotype">
    <text evidence="2">Plants are capable of growth in soil but are more light-sensitive. Plants accumulate wild-type levels of dimeric PSII which assembles and repairs normally, but the quantum yield and O(2) evolution are reduced up to 2-fold. Severe reduction in phosphorylation of D1 and D2 proteins (psbA and psbD) while redox-controlled LHCII phosphorylation is inversely regulated from wild-type, being highly phosphorylated in the dark.</text>
</comment>
<comment type="similarity">
    <text evidence="1">Belongs to the PsbM family.</text>
</comment>
<feature type="chain" id="PRO_0000217579" description="Photosystem II reaction center protein M">
    <location>
        <begin position="1"/>
        <end position="34"/>
    </location>
</feature>
<feature type="transmembrane region" description="Helical" evidence="1">
    <location>
        <begin position="5"/>
        <end position="25"/>
    </location>
</feature>
<protein>
    <recommendedName>
        <fullName evidence="1">Photosystem II reaction center protein M</fullName>
        <shortName evidence="1">PSII-M</shortName>
    </recommendedName>
</protein>
<reference key="1">
    <citation type="journal article" date="1986" name="EMBO J.">
        <title>The complete nucleotide sequence of the tobacco chloroplast genome: its gene organization and expression.</title>
        <authorList>
            <person name="Shinozaki K."/>
            <person name="Ohme M."/>
            <person name="Tanaka M."/>
            <person name="Wakasugi T."/>
            <person name="Hayashida N."/>
            <person name="Matsubayashi T."/>
            <person name="Zaita N."/>
            <person name="Chunwongse J."/>
            <person name="Obokata J."/>
            <person name="Yamaguchi-Shinozaki K."/>
            <person name="Ohto C."/>
            <person name="Torazawa K."/>
            <person name="Meng B.-Y."/>
            <person name="Sugita M."/>
            <person name="Deno H."/>
            <person name="Kamogashira T."/>
            <person name="Yamada K."/>
            <person name="Kusuda J."/>
            <person name="Takaiwa F."/>
            <person name="Kato A."/>
            <person name="Tohdoh N."/>
            <person name="Shimada H."/>
            <person name="Sugiura M."/>
        </authorList>
    </citation>
    <scope>NUCLEOTIDE SEQUENCE [LARGE SCALE GENOMIC DNA]</scope>
    <source>
        <strain>cv. Bright Yellow 4</strain>
    </source>
</reference>
<reference key="2">
    <citation type="journal article" date="2007" name="J. Biol. Chem.">
        <title>Deletion of PsbM in tobacco alters the QB site properties and the electron flow within photosystem II.</title>
        <authorList>
            <person name="Umate P."/>
            <person name="Schwenkert S."/>
            <person name="Karbat I."/>
            <person name="Dal Bosco C."/>
            <person name="Mlcochova L."/>
            <person name="Volz S."/>
            <person name="Zer H."/>
            <person name="Herrmann R.G."/>
            <person name="Ohad I."/>
            <person name="Meurer J."/>
        </authorList>
    </citation>
    <scope>FUNCTION</scope>
    <scope>DISRUPTION PHENOTYPE</scope>
    <source>
        <strain>cv. Petit Havana</strain>
    </source>
</reference>
<proteinExistence type="inferred from homology"/>
<organism>
    <name type="scientific">Nicotiana tabacum</name>
    <name type="common">Common tobacco</name>
    <dbReference type="NCBI Taxonomy" id="4097"/>
    <lineage>
        <taxon>Eukaryota</taxon>
        <taxon>Viridiplantae</taxon>
        <taxon>Streptophyta</taxon>
        <taxon>Embryophyta</taxon>
        <taxon>Tracheophyta</taxon>
        <taxon>Spermatophyta</taxon>
        <taxon>Magnoliopsida</taxon>
        <taxon>eudicotyledons</taxon>
        <taxon>Gunneridae</taxon>
        <taxon>Pentapetalae</taxon>
        <taxon>asterids</taxon>
        <taxon>lamiids</taxon>
        <taxon>Solanales</taxon>
        <taxon>Solanaceae</taxon>
        <taxon>Nicotianoideae</taxon>
        <taxon>Nicotianeae</taxon>
        <taxon>Nicotiana</taxon>
    </lineage>
</organism>
<name>PSBM_TOBAC</name>